<reference key="1">
    <citation type="journal article" date="2008" name="PLoS ONE">
        <title>Genome sequence of Brucella abortus vaccine strain S19 compared to virulent strains yields candidate virulence genes.</title>
        <authorList>
            <person name="Crasta O.R."/>
            <person name="Folkerts O."/>
            <person name="Fei Z."/>
            <person name="Mane S.P."/>
            <person name="Evans C."/>
            <person name="Martino-Catt S."/>
            <person name="Bricker B."/>
            <person name="Yu G."/>
            <person name="Du L."/>
            <person name="Sobral B.W."/>
        </authorList>
    </citation>
    <scope>NUCLEOTIDE SEQUENCE [LARGE SCALE GENOMIC DNA]</scope>
    <source>
        <strain>S19</strain>
    </source>
</reference>
<feature type="chain" id="PRO_1000132650" description="Flagellar hook-basal body complex protein FliE">
    <location>
        <begin position="1"/>
        <end position="111"/>
    </location>
</feature>
<name>FLIE_BRUA1</name>
<protein>
    <recommendedName>
        <fullName evidence="1">Flagellar hook-basal body complex protein FliE</fullName>
    </recommendedName>
</protein>
<evidence type="ECO:0000255" key="1">
    <source>
        <dbReference type="HAMAP-Rule" id="MF_00724"/>
    </source>
</evidence>
<dbReference type="EMBL" id="CP000888">
    <property type="protein sequence ID" value="ACD73662.1"/>
    <property type="molecule type" value="Genomic_DNA"/>
</dbReference>
<dbReference type="RefSeq" id="WP_002966429.1">
    <property type="nucleotide sequence ID" value="NC_010740.1"/>
</dbReference>
<dbReference type="SMR" id="B2SCV8"/>
<dbReference type="KEGG" id="bmc:BAbS19_II01410"/>
<dbReference type="HOGENOM" id="CLU_147249_2_0_5"/>
<dbReference type="Proteomes" id="UP000002565">
    <property type="component" value="Chromosome 2"/>
</dbReference>
<dbReference type="GO" id="GO:0009425">
    <property type="term" value="C:bacterial-type flagellum basal body"/>
    <property type="evidence" value="ECO:0007669"/>
    <property type="project" value="UniProtKB-SubCell"/>
</dbReference>
<dbReference type="GO" id="GO:0003774">
    <property type="term" value="F:cytoskeletal motor activity"/>
    <property type="evidence" value="ECO:0007669"/>
    <property type="project" value="InterPro"/>
</dbReference>
<dbReference type="GO" id="GO:0005198">
    <property type="term" value="F:structural molecule activity"/>
    <property type="evidence" value="ECO:0007669"/>
    <property type="project" value="InterPro"/>
</dbReference>
<dbReference type="GO" id="GO:0071973">
    <property type="term" value="P:bacterial-type flagellum-dependent cell motility"/>
    <property type="evidence" value="ECO:0007669"/>
    <property type="project" value="InterPro"/>
</dbReference>
<dbReference type="HAMAP" id="MF_00724">
    <property type="entry name" value="FliE"/>
    <property type="match status" value="1"/>
</dbReference>
<dbReference type="InterPro" id="IPR001624">
    <property type="entry name" value="FliE"/>
</dbReference>
<dbReference type="PANTHER" id="PTHR34653">
    <property type="match status" value="1"/>
</dbReference>
<dbReference type="PANTHER" id="PTHR34653:SF1">
    <property type="entry name" value="FLAGELLAR HOOK-BASAL BODY COMPLEX PROTEIN FLIE"/>
    <property type="match status" value="1"/>
</dbReference>
<dbReference type="Pfam" id="PF02049">
    <property type="entry name" value="FliE"/>
    <property type="match status" value="1"/>
</dbReference>
<dbReference type="PRINTS" id="PR01006">
    <property type="entry name" value="FLGHOOKFLIE"/>
</dbReference>
<gene>
    <name evidence="1" type="primary">fliE</name>
    <name type="ordered locus">BAbS19_II01410</name>
</gene>
<comment type="subcellular location">
    <subcellularLocation>
        <location evidence="1">Bacterial flagellum basal body</location>
    </subcellularLocation>
</comment>
<comment type="similarity">
    <text evidence="1">Belongs to the FliE family.</text>
</comment>
<keyword id="KW-0975">Bacterial flagellum</keyword>
<organism>
    <name type="scientific">Brucella abortus (strain S19)</name>
    <dbReference type="NCBI Taxonomy" id="430066"/>
    <lineage>
        <taxon>Bacteria</taxon>
        <taxon>Pseudomonadati</taxon>
        <taxon>Pseudomonadota</taxon>
        <taxon>Alphaproteobacteria</taxon>
        <taxon>Hyphomicrobiales</taxon>
        <taxon>Brucellaceae</taxon>
        <taxon>Brucella/Ochrobactrum group</taxon>
        <taxon>Brucella</taxon>
    </lineage>
</organism>
<accession>B2SCV8</accession>
<sequence>MYDSIMSVSARNALSRLSETVAEKGVGSASAPQAVPAAPGASFGEVLSQMTGSVSQKLQAAEATSIQGIKGDAPVRDVVSSVMEAEQSLQTAIAIRDKIVQAYLEISRMPI</sequence>
<proteinExistence type="inferred from homology"/>